<evidence type="ECO:0000250" key="1">
    <source>
        <dbReference type="UniProtKB" id="O31743"/>
    </source>
</evidence>
<evidence type="ECO:0000255" key="2"/>
<evidence type="ECO:0000255" key="3">
    <source>
        <dbReference type="PROSITE-ProRule" id="PRU01058"/>
    </source>
</evidence>
<evidence type="ECO:0000303" key="4">
    <source>
    </source>
</evidence>
<evidence type="ECO:0000305" key="5"/>
<evidence type="ECO:0000305" key="6">
    <source>
    </source>
</evidence>
<evidence type="ECO:0000305" key="7">
    <source>
    </source>
</evidence>
<evidence type="ECO:0000312" key="8">
    <source>
        <dbReference type="Araport" id="AT4G10650"/>
    </source>
</evidence>
<evidence type="ECO:0000312" key="9">
    <source>
        <dbReference type="EMBL" id="AAC35523.1"/>
    </source>
</evidence>
<evidence type="ECO:0000312" key="10">
    <source>
        <dbReference type="EMBL" id="CAB40031.1"/>
    </source>
</evidence>
<evidence type="ECO:0000312" key="11">
    <source>
        <dbReference type="Proteomes" id="UP000006548"/>
    </source>
</evidence>
<keyword id="KW-0342">GTP-binding</keyword>
<keyword id="KW-0378">Hydrolase</keyword>
<keyword id="KW-0496">Mitochondrion</keyword>
<keyword id="KW-0547">Nucleotide-binding</keyword>
<keyword id="KW-1185">Reference proteome</keyword>
<keyword id="KW-0809">Transit peptide</keyword>
<accession>O82497</accession>
<accession>Q9T0C2</accession>
<protein>
    <recommendedName>
        <fullName evidence="4">DAR GTPase 2, mitochondrial</fullName>
    </recommendedName>
</protein>
<sequence length="377" mass="42424">MATAKTWKIAREIGDAVIKASRNPNRRWYGPHMAAAVRAISERIPLVDFVLEIRDARIPLSSEYELLRKFSPLPSKRIIVLNKMELADPLELKKCIDYFEERNYLSYAVNSHNKDCVKQLLNFLQSQVRELHKAGHSGHTTTMMLLGIPNVGKSALSNSLHHIGRISAAEKGKLKHTTVSSQPGDTKDIMSLKIGSHPNVYVLDTPGIFPPNLYDAEICAKLALTGAIPDDIVGELKLARLFLTILNSSHEYKKWAKLCKSQDLTESLSDESSKSDAKHKRQYATDHTQDFIVYDVRRVLYETISAFDGNLEDEISMGNLIETQFAALRSVLRVPEEASEFADLRVASKILNLYRTGRLGHYTLEHVSALAKSYTYL</sequence>
<dbReference type="EMBL" id="AF080119">
    <property type="protein sequence ID" value="AAC35523.1"/>
    <property type="molecule type" value="Genomic_DNA"/>
</dbReference>
<dbReference type="EMBL" id="AL049523">
    <property type="protein sequence ID" value="CAB40031.1"/>
    <property type="status" value="ALT_SEQ"/>
    <property type="molecule type" value="Genomic_DNA"/>
</dbReference>
<dbReference type="EMBL" id="AL161518">
    <property type="protein sequence ID" value="CAB81166.1"/>
    <property type="status" value="ALT_SEQ"/>
    <property type="molecule type" value="Genomic_DNA"/>
</dbReference>
<dbReference type="EMBL" id="CP002687">
    <property type="protein sequence ID" value="AEE82913.1"/>
    <property type="molecule type" value="Genomic_DNA"/>
</dbReference>
<dbReference type="PIR" id="T01912">
    <property type="entry name" value="T01912"/>
</dbReference>
<dbReference type="PIR" id="T04200">
    <property type="entry name" value="T04200"/>
</dbReference>
<dbReference type="RefSeq" id="NP_192803.4">
    <property type="nucleotide sequence ID" value="NM_117133.5"/>
</dbReference>
<dbReference type="SMR" id="O82497"/>
<dbReference type="FunCoup" id="O82497">
    <property type="interactions" value="3029"/>
</dbReference>
<dbReference type="STRING" id="3702.O82497"/>
<dbReference type="PaxDb" id="3702-AT4G10650.1"/>
<dbReference type="ProteomicsDB" id="224101"/>
<dbReference type="EnsemblPlants" id="AT4G10650.1">
    <property type="protein sequence ID" value="AT4G10650.1"/>
    <property type="gene ID" value="AT4G10650"/>
</dbReference>
<dbReference type="GeneID" id="826658"/>
<dbReference type="Gramene" id="AT4G10650.1">
    <property type="protein sequence ID" value="AT4G10650.1"/>
    <property type="gene ID" value="AT4G10650"/>
</dbReference>
<dbReference type="KEGG" id="ath:AT4G10650"/>
<dbReference type="Araport" id="AT4G10650"/>
<dbReference type="TAIR" id="AT4G10650"/>
<dbReference type="eggNOG" id="KOG2485">
    <property type="taxonomic scope" value="Eukaryota"/>
</dbReference>
<dbReference type="HOGENOM" id="CLU_011106_0_3_1"/>
<dbReference type="InParanoid" id="O82497"/>
<dbReference type="OMA" id="TDHTQDC"/>
<dbReference type="PhylomeDB" id="O82497"/>
<dbReference type="PRO" id="PR:O82497"/>
<dbReference type="Proteomes" id="UP000006548">
    <property type="component" value="Chromosome 4"/>
</dbReference>
<dbReference type="ExpressionAtlas" id="O82497">
    <property type="expression patterns" value="baseline and differential"/>
</dbReference>
<dbReference type="GO" id="GO:0005739">
    <property type="term" value="C:mitochondrion"/>
    <property type="evidence" value="ECO:0007669"/>
    <property type="project" value="UniProtKB-SubCell"/>
</dbReference>
<dbReference type="GO" id="GO:0005525">
    <property type="term" value="F:GTP binding"/>
    <property type="evidence" value="ECO:0007669"/>
    <property type="project" value="UniProtKB-KW"/>
</dbReference>
<dbReference type="GO" id="GO:0016787">
    <property type="term" value="F:hydrolase activity"/>
    <property type="evidence" value="ECO:0007669"/>
    <property type="project" value="UniProtKB-KW"/>
</dbReference>
<dbReference type="CDD" id="cd01856">
    <property type="entry name" value="YlqF"/>
    <property type="match status" value="1"/>
</dbReference>
<dbReference type="FunFam" id="3.40.50.300:FF:001008">
    <property type="entry name" value="Mitochondrial GTPase 1"/>
    <property type="match status" value="1"/>
</dbReference>
<dbReference type="Gene3D" id="3.40.50.300">
    <property type="entry name" value="P-loop containing nucleotide triphosphate hydrolases"/>
    <property type="match status" value="1"/>
</dbReference>
<dbReference type="InterPro" id="IPR030378">
    <property type="entry name" value="G_CP_dom"/>
</dbReference>
<dbReference type="InterPro" id="IPR006073">
    <property type="entry name" value="GTP-bd"/>
</dbReference>
<dbReference type="InterPro" id="IPR027417">
    <property type="entry name" value="P-loop_NTPase"/>
</dbReference>
<dbReference type="PANTHER" id="PTHR45782:SF1">
    <property type="entry name" value="DAR GTPASE 2, MITOCHONDRIAL"/>
    <property type="match status" value="1"/>
</dbReference>
<dbReference type="PANTHER" id="PTHR45782">
    <property type="entry name" value="MITOCHONDRIAL RIBOSOME-ASSOCIATED GTPASE 1"/>
    <property type="match status" value="1"/>
</dbReference>
<dbReference type="Pfam" id="PF01926">
    <property type="entry name" value="MMR_HSR1"/>
    <property type="match status" value="1"/>
</dbReference>
<dbReference type="SUPFAM" id="SSF52540">
    <property type="entry name" value="P-loop containing nucleoside triphosphate hydrolases"/>
    <property type="match status" value="1"/>
</dbReference>
<dbReference type="PROSITE" id="PS51721">
    <property type="entry name" value="G_CP"/>
    <property type="match status" value="1"/>
</dbReference>
<comment type="function">
    <text evidence="6">GTPase that may function in mitochondrial ribosome assembly (Probable).</text>
</comment>
<comment type="subcellular location">
    <subcellularLocation>
        <location evidence="2">Mitochondrion</location>
    </subcellularLocation>
</comment>
<comment type="domain">
    <text evidence="5">In contrast to other GTP-binding proteins, this family is characterized by a circular permutation of the GTPase motifs described by a G4-G1-G3 pattern.</text>
</comment>
<comment type="domain">
    <text evidence="7">The DARXP motif is also sometime designated as G6 region.</text>
</comment>
<comment type="similarity">
    <text evidence="3">Belongs to the TRAFAC class YlqF/YawG GTPase family. MTG1 subfamily.</text>
</comment>
<comment type="sequence caution" evidence="5">
    <conflict type="erroneous gene model prediction">
        <sequence resource="EMBL-CDS" id="CAB40031"/>
    </conflict>
</comment>
<comment type="sequence caution" evidence="5">
    <conflict type="erroneous gene model prediction">
        <sequence resource="EMBL-CDS" id="CAB81166"/>
    </conflict>
</comment>
<name>DGP2_ARATH</name>
<gene>
    <name evidence="4" type="primary">DGP2</name>
    <name evidence="8" type="ordered locus">At4g10650</name>
    <name evidence="9" type="ORF">T12H20.1</name>
    <name evidence="10" type="ORF">T4F9.110</name>
</gene>
<reference key="1">
    <citation type="journal article" date="1999" name="Nature">
        <title>Sequence and analysis of chromosome 4 of the plant Arabidopsis thaliana.</title>
        <authorList>
            <person name="Mayer K.F.X."/>
            <person name="Schueller C."/>
            <person name="Wambutt R."/>
            <person name="Murphy G."/>
            <person name="Volckaert G."/>
            <person name="Pohl T."/>
            <person name="Duesterhoeft A."/>
            <person name="Stiekema W."/>
            <person name="Entian K.-D."/>
            <person name="Terryn N."/>
            <person name="Harris B."/>
            <person name="Ansorge W."/>
            <person name="Brandt P."/>
            <person name="Grivell L.A."/>
            <person name="Rieger M."/>
            <person name="Weichselgartner M."/>
            <person name="de Simone V."/>
            <person name="Obermaier B."/>
            <person name="Mache R."/>
            <person name="Mueller M."/>
            <person name="Kreis M."/>
            <person name="Delseny M."/>
            <person name="Puigdomenech P."/>
            <person name="Watson M."/>
            <person name="Schmidtheini T."/>
            <person name="Reichert B."/>
            <person name="Portetelle D."/>
            <person name="Perez-Alonso M."/>
            <person name="Boutry M."/>
            <person name="Bancroft I."/>
            <person name="Vos P."/>
            <person name="Hoheisel J."/>
            <person name="Zimmermann W."/>
            <person name="Wedler H."/>
            <person name="Ridley P."/>
            <person name="Langham S.-A."/>
            <person name="McCullagh B."/>
            <person name="Bilham L."/>
            <person name="Robben J."/>
            <person name="van der Schueren J."/>
            <person name="Grymonprez B."/>
            <person name="Chuang Y.-J."/>
            <person name="Vandenbussche F."/>
            <person name="Braeken M."/>
            <person name="Weltjens I."/>
            <person name="Voet M."/>
            <person name="Bastiaens I."/>
            <person name="Aert R."/>
            <person name="Defoor E."/>
            <person name="Weitzenegger T."/>
            <person name="Bothe G."/>
            <person name="Ramsperger U."/>
            <person name="Hilbert H."/>
            <person name="Braun M."/>
            <person name="Holzer E."/>
            <person name="Brandt A."/>
            <person name="Peters S."/>
            <person name="van Staveren M."/>
            <person name="Dirkse W."/>
            <person name="Mooijman P."/>
            <person name="Klein Lankhorst R."/>
            <person name="Rose M."/>
            <person name="Hauf J."/>
            <person name="Koetter P."/>
            <person name="Berneiser S."/>
            <person name="Hempel S."/>
            <person name="Feldpausch M."/>
            <person name="Lamberth S."/>
            <person name="Van den Daele H."/>
            <person name="De Keyser A."/>
            <person name="Buysshaert C."/>
            <person name="Gielen J."/>
            <person name="Villarroel R."/>
            <person name="De Clercq R."/>
            <person name="van Montagu M."/>
            <person name="Rogers J."/>
            <person name="Cronin A."/>
            <person name="Quail M.A."/>
            <person name="Bray-Allen S."/>
            <person name="Clark L."/>
            <person name="Doggett J."/>
            <person name="Hall S."/>
            <person name="Kay M."/>
            <person name="Lennard N."/>
            <person name="McLay K."/>
            <person name="Mayes R."/>
            <person name="Pettett A."/>
            <person name="Rajandream M.A."/>
            <person name="Lyne M."/>
            <person name="Benes V."/>
            <person name="Rechmann S."/>
            <person name="Borkova D."/>
            <person name="Bloecker H."/>
            <person name="Scharfe M."/>
            <person name="Grimm M."/>
            <person name="Loehnert T.-H."/>
            <person name="Dose S."/>
            <person name="de Haan M."/>
            <person name="Maarse A.C."/>
            <person name="Schaefer M."/>
            <person name="Mueller-Auer S."/>
            <person name="Gabel C."/>
            <person name="Fuchs M."/>
            <person name="Fartmann B."/>
            <person name="Granderath K."/>
            <person name="Dauner D."/>
            <person name="Herzl A."/>
            <person name="Neumann S."/>
            <person name="Argiriou A."/>
            <person name="Vitale D."/>
            <person name="Liguori R."/>
            <person name="Piravandi E."/>
            <person name="Massenet O."/>
            <person name="Quigley F."/>
            <person name="Clabauld G."/>
            <person name="Muendlein A."/>
            <person name="Felber R."/>
            <person name="Schnabl S."/>
            <person name="Hiller R."/>
            <person name="Schmidt W."/>
            <person name="Lecharny A."/>
            <person name="Aubourg S."/>
            <person name="Chefdor F."/>
            <person name="Cooke R."/>
            <person name="Berger C."/>
            <person name="Monfort A."/>
            <person name="Casacuberta E."/>
            <person name="Gibbons T."/>
            <person name="Weber N."/>
            <person name="Vandenbol M."/>
            <person name="Bargues M."/>
            <person name="Terol J."/>
            <person name="Torres A."/>
            <person name="Perez-Perez A."/>
            <person name="Purnelle B."/>
            <person name="Bent E."/>
            <person name="Johnson S."/>
            <person name="Tacon D."/>
            <person name="Jesse T."/>
            <person name="Heijnen L."/>
            <person name="Schwarz S."/>
            <person name="Scholler P."/>
            <person name="Heber S."/>
            <person name="Francs P."/>
            <person name="Bielke C."/>
            <person name="Frishman D."/>
            <person name="Haase D."/>
            <person name="Lemcke K."/>
            <person name="Mewes H.-W."/>
            <person name="Stocker S."/>
            <person name="Zaccaria P."/>
            <person name="Bevan M."/>
            <person name="Wilson R.K."/>
            <person name="de la Bastide M."/>
            <person name="Habermann K."/>
            <person name="Parnell L."/>
            <person name="Dedhia N."/>
            <person name="Gnoj L."/>
            <person name="Schutz K."/>
            <person name="Huang E."/>
            <person name="Spiegel L."/>
            <person name="Sekhon M."/>
            <person name="Murray J."/>
            <person name="Sheet P."/>
            <person name="Cordes M."/>
            <person name="Abu-Threideh J."/>
            <person name="Stoneking T."/>
            <person name="Kalicki J."/>
            <person name="Graves T."/>
            <person name="Harmon G."/>
            <person name="Edwards J."/>
            <person name="Latreille P."/>
            <person name="Courtney L."/>
            <person name="Cloud J."/>
            <person name="Abbott A."/>
            <person name="Scott K."/>
            <person name="Johnson D."/>
            <person name="Minx P."/>
            <person name="Bentley D."/>
            <person name="Fulton B."/>
            <person name="Miller N."/>
            <person name="Greco T."/>
            <person name="Kemp K."/>
            <person name="Kramer J."/>
            <person name="Fulton L."/>
            <person name="Mardis E."/>
            <person name="Dante M."/>
            <person name="Pepin K."/>
            <person name="Hillier L.W."/>
            <person name="Nelson J."/>
            <person name="Spieth J."/>
            <person name="Ryan E."/>
            <person name="Andrews S."/>
            <person name="Geisel C."/>
            <person name="Layman D."/>
            <person name="Du H."/>
            <person name="Ali J."/>
            <person name="Berghoff A."/>
            <person name="Jones K."/>
            <person name="Drone K."/>
            <person name="Cotton M."/>
            <person name="Joshu C."/>
            <person name="Antonoiu B."/>
            <person name="Zidanic M."/>
            <person name="Strong C."/>
            <person name="Sun H."/>
            <person name="Lamar B."/>
            <person name="Yordan C."/>
            <person name="Ma P."/>
            <person name="Zhong J."/>
            <person name="Preston R."/>
            <person name="Vil D."/>
            <person name="Shekher M."/>
            <person name="Matero A."/>
            <person name="Shah R."/>
            <person name="Swaby I.K."/>
            <person name="O'Shaughnessy A."/>
            <person name="Rodriguez M."/>
            <person name="Hoffman J."/>
            <person name="Till S."/>
            <person name="Granat S."/>
            <person name="Shohdy N."/>
            <person name="Hasegawa A."/>
            <person name="Hameed A."/>
            <person name="Lodhi M."/>
            <person name="Johnson A."/>
            <person name="Chen E."/>
            <person name="Marra M.A."/>
            <person name="Martienssen R."/>
            <person name="McCombie W.R."/>
        </authorList>
    </citation>
    <scope>NUCLEOTIDE SEQUENCE [LARGE SCALE GENOMIC DNA]</scope>
    <source>
        <strain>cv. Columbia</strain>
    </source>
</reference>
<reference key="2">
    <citation type="journal article" date="2017" name="Plant J.">
        <title>Araport11: a complete reannotation of the Arabidopsis thaliana reference genome.</title>
        <authorList>
            <person name="Cheng C.Y."/>
            <person name="Krishnakumar V."/>
            <person name="Chan A.P."/>
            <person name="Thibaud-Nissen F."/>
            <person name="Schobel S."/>
            <person name="Town C.D."/>
        </authorList>
    </citation>
    <scope>GENOME REANNOTATION</scope>
    <source>
        <strain>cv. Columbia</strain>
    </source>
</reference>
<reference key="3">
    <citation type="journal article" date="1998" name="Gene">
        <title>Analysis of the genomic organisation of a small chromosome of Leishmania braziliensis M2903 reveals two genes encoding GTP-binding proteins, one of which belongs to a new G-protein family and is an antigen.</title>
        <authorList>
            <person name="Fu G."/>
            <person name="Melville S."/>
            <person name="Brewster S."/>
            <person name="Warner J."/>
            <person name="Barker D.C."/>
        </authorList>
    </citation>
    <scope>DOMAIN</scope>
    <scope>GENE FAMILY</scope>
</reference>
<reference key="4">
    <citation type="journal article" date="2006" name="Genetics">
        <title>Arabidopsis SHORT INTEGUMENTS 2 is a mitochondrial DAR GTPase.</title>
        <authorList>
            <person name="Hill T.A."/>
            <person name="Broadhvest J."/>
            <person name="Kuzoff R.K."/>
            <person name="Gasser C.S."/>
        </authorList>
    </citation>
    <scope>GENE FAMILY</scope>
    <scope>NOMENCLATURE</scope>
</reference>
<proteinExistence type="inferred from homology"/>
<feature type="transit peptide" description="Mitochondrion" evidence="2">
    <location>
        <begin position="1"/>
        <end position="21"/>
    </location>
</feature>
<feature type="chain" id="PRO_0000432554" description="DAR GTPase 2, mitochondrial">
    <location>
        <begin position="22"/>
        <end position="377"/>
    </location>
</feature>
<feature type="domain" description="CP-type G" evidence="3">
    <location>
        <begin position="34"/>
        <end position="211"/>
    </location>
</feature>
<feature type="short sequence motif" description="DARXP motif">
    <location>
        <begin position="55"/>
        <end position="59"/>
    </location>
</feature>
<feature type="binding site" evidence="1">
    <location>
        <begin position="82"/>
        <end position="85"/>
    </location>
    <ligand>
        <name>GTP</name>
        <dbReference type="ChEBI" id="CHEBI:37565"/>
    </ligand>
</feature>
<feature type="binding site" evidence="1">
    <location>
        <begin position="110"/>
        <end position="111"/>
    </location>
    <ligand>
        <name>GTP</name>
        <dbReference type="ChEBI" id="CHEBI:37565"/>
    </ligand>
</feature>
<feature type="binding site" evidence="1">
    <location>
        <begin position="150"/>
        <end position="155"/>
    </location>
    <ligand>
        <name>GTP</name>
        <dbReference type="ChEBI" id="CHEBI:37565"/>
    </ligand>
</feature>
<feature type="binding site" evidence="1">
    <location>
        <position position="207"/>
    </location>
    <ligand>
        <name>GTP</name>
        <dbReference type="ChEBI" id="CHEBI:37565"/>
    </ligand>
</feature>
<organism evidence="11">
    <name type="scientific">Arabidopsis thaliana</name>
    <name type="common">Mouse-ear cress</name>
    <dbReference type="NCBI Taxonomy" id="3702"/>
    <lineage>
        <taxon>Eukaryota</taxon>
        <taxon>Viridiplantae</taxon>
        <taxon>Streptophyta</taxon>
        <taxon>Embryophyta</taxon>
        <taxon>Tracheophyta</taxon>
        <taxon>Spermatophyta</taxon>
        <taxon>Magnoliopsida</taxon>
        <taxon>eudicotyledons</taxon>
        <taxon>Gunneridae</taxon>
        <taxon>Pentapetalae</taxon>
        <taxon>rosids</taxon>
        <taxon>malvids</taxon>
        <taxon>Brassicales</taxon>
        <taxon>Brassicaceae</taxon>
        <taxon>Camelineae</taxon>
        <taxon>Arabidopsis</taxon>
    </lineage>
</organism>